<accession>C6HFQ7</accession>
<proteinExistence type="inferred from homology"/>
<evidence type="ECO:0000250" key="1"/>
<evidence type="ECO:0000255" key="2"/>
<evidence type="ECO:0000255" key="3">
    <source>
        <dbReference type="PROSITE-ProRule" id="PRU00192"/>
    </source>
</evidence>
<evidence type="ECO:0000256" key="4">
    <source>
        <dbReference type="SAM" id="MobiDB-lite"/>
    </source>
</evidence>
<evidence type="ECO:0000305" key="5"/>
<feature type="chain" id="PRO_0000410351" description="High osmolarity signaling protein SHO1">
    <location>
        <begin position="1"/>
        <end position="325"/>
    </location>
</feature>
<feature type="topological domain" description="Cytoplasmic" evidence="2">
    <location>
        <begin position="1"/>
        <end position="40"/>
    </location>
</feature>
<feature type="transmembrane region" description="Helical" evidence="2">
    <location>
        <begin position="41"/>
        <end position="61"/>
    </location>
</feature>
<feature type="topological domain" description="Extracellular" evidence="2">
    <location>
        <begin position="62"/>
        <end position="70"/>
    </location>
</feature>
<feature type="transmembrane region" description="Helical" evidence="2">
    <location>
        <begin position="71"/>
        <end position="91"/>
    </location>
</feature>
<feature type="topological domain" description="Cytoplasmic" evidence="2">
    <location>
        <begin position="92"/>
        <end position="96"/>
    </location>
</feature>
<feature type="transmembrane region" description="Helical" evidence="2">
    <location>
        <begin position="97"/>
        <end position="117"/>
    </location>
</feature>
<feature type="topological domain" description="Extracellular" evidence="2">
    <location>
        <begin position="118"/>
        <end position="129"/>
    </location>
</feature>
<feature type="transmembrane region" description="Helical" evidence="2">
    <location>
        <begin position="130"/>
        <end position="150"/>
    </location>
</feature>
<feature type="topological domain" description="Cytoplasmic" evidence="2">
    <location>
        <begin position="151"/>
        <end position="325"/>
    </location>
</feature>
<feature type="domain" description="SH3" evidence="3">
    <location>
        <begin position="266"/>
        <end position="325"/>
    </location>
</feature>
<feature type="region of interest" description="Disordered" evidence="4">
    <location>
        <begin position="160"/>
        <end position="182"/>
    </location>
</feature>
<feature type="region of interest" description="Disordered" evidence="4">
    <location>
        <begin position="236"/>
        <end position="263"/>
    </location>
</feature>
<feature type="compositionally biased region" description="Polar residues" evidence="4">
    <location>
        <begin position="173"/>
        <end position="182"/>
    </location>
</feature>
<protein>
    <recommendedName>
        <fullName>High osmolarity signaling protein SHO1</fullName>
    </recommendedName>
    <alternativeName>
        <fullName>Osmosensor SHO1</fullName>
    </alternativeName>
</protein>
<dbReference type="EMBL" id="GG692425">
    <property type="protein sequence ID" value="EER40658.1"/>
    <property type="molecule type" value="Genomic_DNA"/>
</dbReference>
<dbReference type="SMR" id="C6HFQ7"/>
<dbReference type="STRING" id="544712.C6HFQ7"/>
<dbReference type="VEuPathDB" id="FungiDB:HCDG_05247"/>
<dbReference type="eggNOG" id="ENOG502QW7A">
    <property type="taxonomic scope" value="Eukaryota"/>
</dbReference>
<dbReference type="HOGENOM" id="CLU_043316_1_0_1"/>
<dbReference type="OMA" id="NIVWIFY"/>
<dbReference type="OrthoDB" id="968at299071"/>
<dbReference type="Proteomes" id="UP000002624">
    <property type="component" value="Unassembled WGS sequence"/>
</dbReference>
<dbReference type="GO" id="GO:0005886">
    <property type="term" value="C:plasma membrane"/>
    <property type="evidence" value="ECO:0007669"/>
    <property type="project" value="UniProtKB-SubCell"/>
</dbReference>
<dbReference type="CDD" id="cd11855">
    <property type="entry name" value="SH3_Sho1p"/>
    <property type="match status" value="1"/>
</dbReference>
<dbReference type="FunFam" id="2.30.30.40:FF:000213">
    <property type="entry name" value="High osmolarity signaling protein SHO1"/>
    <property type="match status" value="1"/>
</dbReference>
<dbReference type="Gene3D" id="2.30.30.40">
    <property type="entry name" value="SH3 Domains"/>
    <property type="match status" value="1"/>
</dbReference>
<dbReference type="InterPro" id="IPR036028">
    <property type="entry name" value="SH3-like_dom_sf"/>
</dbReference>
<dbReference type="InterPro" id="IPR001452">
    <property type="entry name" value="SH3_domain"/>
</dbReference>
<dbReference type="InterPro" id="IPR035522">
    <property type="entry name" value="Sho1_SH3"/>
</dbReference>
<dbReference type="Pfam" id="PF00018">
    <property type="entry name" value="SH3_1"/>
    <property type="match status" value="1"/>
</dbReference>
<dbReference type="PRINTS" id="PR00452">
    <property type="entry name" value="SH3DOMAIN"/>
</dbReference>
<dbReference type="SMART" id="SM00326">
    <property type="entry name" value="SH3"/>
    <property type="match status" value="1"/>
</dbReference>
<dbReference type="SUPFAM" id="SSF50044">
    <property type="entry name" value="SH3-domain"/>
    <property type="match status" value="1"/>
</dbReference>
<dbReference type="PROSITE" id="PS50002">
    <property type="entry name" value="SH3"/>
    <property type="match status" value="1"/>
</dbReference>
<gene>
    <name type="primary">SHO1</name>
    <name type="ORF">HCDG_05247</name>
</gene>
<comment type="function">
    <text evidence="1">Plasma membrane osmosensor that activates the high osmolarity glycerol (HOG) MAPK signaling pathway in response to high osmolarity.</text>
</comment>
<comment type="subunit">
    <text evidence="1">Forms homooligomers.</text>
</comment>
<comment type="subcellular location">
    <subcellularLocation>
        <location evidence="1">Cell membrane</location>
        <topology evidence="1">Multi-pass membrane protein</topology>
    </subcellularLocation>
</comment>
<comment type="similarity">
    <text evidence="5">Belongs to the SHO1 family.</text>
</comment>
<reference key="1">
    <citation type="submission" date="2009-05" db="EMBL/GenBank/DDBJ databases">
        <title>The genome sequence of Ajellomyces capsulatus strain H143.</title>
        <authorList>
            <person name="Champion M."/>
            <person name="Cuomo C.A."/>
            <person name="Ma L.-J."/>
            <person name="Henn M.R."/>
            <person name="Sil A."/>
            <person name="Goldman B."/>
            <person name="Young S.K."/>
            <person name="Kodira C.D."/>
            <person name="Zeng Q."/>
            <person name="Koehrsen M."/>
            <person name="Alvarado L."/>
            <person name="Berlin A.M."/>
            <person name="Borenstein D."/>
            <person name="Chen Z."/>
            <person name="Engels R."/>
            <person name="Freedman E."/>
            <person name="Gellesch M."/>
            <person name="Goldberg J."/>
            <person name="Griggs A."/>
            <person name="Gujja S."/>
            <person name="Heiman D.I."/>
            <person name="Hepburn T.A."/>
            <person name="Howarth C."/>
            <person name="Jen D."/>
            <person name="Larson L."/>
            <person name="Lewis B."/>
            <person name="Mehta T."/>
            <person name="Park D."/>
            <person name="Pearson M."/>
            <person name="Roberts A."/>
            <person name="Saif S."/>
            <person name="Shea T.D."/>
            <person name="Shenoy N."/>
            <person name="Sisk P."/>
            <person name="Stolte C."/>
            <person name="Sykes S."/>
            <person name="Walk T."/>
            <person name="White J."/>
            <person name="Yandava C."/>
            <person name="Klein B."/>
            <person name="McEwen J.G."/>
            <person name="Puccia R."/>
            <person name="Goldman G.H."/>
            <person name="Felipe M.S."/>
            <person name="Nino-Vega G."/>
            <person name="San-Blas G."/>
            <person name="Taylor J.W."/>
            <person name="Mendoza L."/>
            <person name="Galagan J.E."/>
            <person name="Nusbaum C."/>
            <person name="Birren B.W."/>
        </authorList>
    </citation>
    <scope>NUCLEOTIDE SEQUENCE [LARGE SCALE GENOMIC DNA]</scope>
    <source>
        <strain>H143</strain>
    </source>
</reference>
<sequence>MVTYSANYSTSFQKRSPFAVHNRRSNMARMDFNNIVGDPFALITISTSLIAWLLSFATCVISDIQGAFPNFAWWAVGYMLCAIIGISLVLASQTSHVYGVAIVGYLAAGLTFTTLAVNSLIYDDQASKQAGAAGFILQSMVTIVWIFYFGSSSQTSSRPYLDSMGAGKEHPSYRNSKPLSTNYGARPETVVSGNQPPQMYTSAQLNGFETSSPVSGYPPTAANGAENGTQNRFVGPAIGSQSNLGGGSTLGADHPSTPNEVSQPTVYPYRAKAIYSYEANPDDANEISFSKHEILDVSDVSGRWWQAKKASGETGIAPSNYLILI</sequence>
<keyword id="KW-1003">Cell membrane</keyword>
<keyword id="KW-0472">Membrane</keyword>
<keyword id="KW-1185">Reference proteome</keyword>
<keyword id="KW-0728">SH3 domain</keyword>
<keyword id="KW-0346">Stress response</keyword>
<keyword id="KW-0812">Transmembrane</keyword>
<keyword id="KW-1133">Transmembrane helix</keyword>
<name>SHO1_AJECH</name>
<organism>
    <name type="scientific">Ajellomyces capsulatus (strain H143)</name>
    <name type="common">Darling's disease fungus</name>
    <name type="synonym">Histoplasma capsulatum</name>
    <dbReference type="NCBI Taxonomy" id="544712"/>
    <lineage>
        <taxon>Eukaryota</taxon>
        <taxon>Fungi</taxon>
        <taxon>Dikarya</taxon>
        <taxon>Ascomycota</taxon>
        <taxon>Pezizomycotina</taxon>
        <taxon>Eurotiomycetes</taxon>
        <taxon>Eurotiomycetidae</taxon>
        <taxon>Onygenales</taxon>
        <taxon>Ajellomycetaceae</taxon>
        <taxon>Histoplasma</taxon>
    </lineage>
</organism>